<dbReference type="EMBL" id="CP001103">
    <property type="protein sequence ID" value="AEA98164.1"/>
    <property type="molecule type" value="Genomic_DNA"/>
</dbReference>
<dbReference type="RefSeq" id="WP_012518489.1">
    <property type="nucleotide sequence ID" value="NC_011138.3"/>
</dbReference>
<dbReference type="SMR" id="B4RZ39"/>
<dbReference type="KEGG" id="amc:MADE_1010130"/>
<dbReference type="HOGENOM" id="CLU_113254_0_0_6"/>
<dbReference type="Proteomes" id="UP000001870">
    <property type="component" value="Chromosome"/>
</dbReference>
<dbReference type="GO" id="GO:0005829">
    <property type="term" value="C:cytosol"/>
    <property type="evidence" value="ECO:0007669"/>
    <property type="project" value="TreeGrafter"/>
</dbReference>
<dbReference type="GO" id="GO:0033592">
    <property type="term" value="F:RNA strand annealing activity"/>
    <property type="evidence" value="ECO:0007669"/>
    <property type="project" value="UniProtKB-UniRule"/>
</dbReference>
<dbReference type="GO" id="GO:0034057">
    <property type="term" value="F:RNA strand-exchange activity"/>
    <property type="evidence" value="ECO:0007669"/>
    <property type="project" value="UniProtKB-UniRule"/>
</dbReference>
<dbReference type="GO" id="GO:0010608">
    <property type="term" value="P:post-transcriptional regulation of gene expression"/>
    <property type="evidence" value="ECO:0007669"/>
    <property type="project" value="InterPro"/>
</dbReference>
<dbReference type="Gene3D" id="1.10.1710.10">
    <property type="entry name" value="ProQ/FinO domain"/>
    <property type="match status" value="1"/>
</dbReference>
<dbReference type="HAMAP" id="MF_00749">
    <property type="entry name" value="ProQ"/>
    <property type="match status" value="1"/>
</dbReference>
<dbReference type="InterPro" id="IPR023529">
    <property type="entry name" value="ProQ"/>
</dbReference>
<dbReference type="InterPro" id="IPR016103">
    <property type="entry name" value="ProQ/FinO"/>
</dbReference>
<dbReference type="InterPro" id="IPR036442">
    <property type="entry name" value="ProQ/FinO_sf"/>
</dbReference>
<dbReference type="InterPro" id="IPR035236">
    <property type="entry name" value="ProQ_C"/>
</dbReference>
<dbReference type="NCBIfam" id="NF003434">
    <property type="entry name" value="PRK04950.1"/>
    <property type="match status" value="1"/>
</dbReference>
<dbReference type="PANTHER" id="PTHR38106">
    <property type="entry name" value="RNA CHAPERONE PROQ"/>
    <property type="match status" value="1"/>
</dbReference>
<dbReference type="PANTHER" id="PTHR38106:SF1">
    <property type="entry name" value="RNA CHAPERONE PROQ"/>
    <property type="match status" value="1"/>
</dbReference>
<dbReference type="Pfam" id="PF04352">
    <property type="entry name" value="ProQ"/>
    <property type="match status" value="1"/>
</dbReference>
<dbReference type="Pfam" id="PF17516">
    <property type="entry name" value="ProQ_C"/>
    <property type="match status" value="1"/>
</dbReference>
<dbReference type="SMART" id="SM00945">
    <property type="entry name" value="ProQ"/>
    <property type="match status" value="1"/>
</dbReference>
<dbReference type="SUPFAM" id="SSF48657">
    <property type="entry name" value="FinO-like"/>
    <property type="match status" value="1"/>
</dbReference>
<organism>
    <name type="scientific">Alteromonas mediterranea (strain DSM 17117 / CIP 110805 / LMG 28347 / Deep ecotype)</name>
    <dbReference type="NCBI Taxonomy" id="1774373"/>
    <lineage>
        <taxon>Bacteria</taxon>
        <taxon>Pseudomonadati</taxon>
        <taxon>Pseudomonadota</taxon>
        <taxon>Gammaproteobacteria</taxon>
        <taxon>Alteromonadales</taxon>
        <taxon>Alteromonadaceae</taxon>
        <taxon>Alteromonas/Salinimonas group</taxon>
        <taxon>Alteromonas</taxon>
    </lineage>
</organism>
<protein>
    <recommendedName>
        <fullName evidence="1">RNA chaperone ProQ</fullName>
    </recommendedName>
</protein>
<proteinExistence type="inferred from homology"/>
<comment type="function">
    <text evidence="1">RNA chaperone with significant RNA binding, RNA strand exchange and RNA duplexing activities.</text>
</comment>
<comment type="subcellular location">
    <subcellularLocation>
        <location evidence="1">Cytoplasm</location>
    </subcellularLocation>
</comment>
<comment type="similarity">
    <text evidence="1">Belongs to the ProQ family.</text>
</comment>
<keyword id="KW-0143">Chaperone</keyword>
<keyword id="KW-0963">Cytoplasm</keyword>
<keyword id="KW-0694">RNA-binding</keyword>
<sequence length="222" mass="24889">MESPEKFTNSKEVIAFLAETFPKCFSIEGEARPLKIGIFQDLAERLEEDERVSKTLLRSTLRHYTNSWRYLYSIKEGANRVDLDGVEGDAIEKEHADHAKQQLDESKAKAAEKRKAKLAQQPKRKDKRQFNRPKGEKSANSDHADTKRGTKPKNNRPNTTPPAKLTDSDLQQGTQVTVKLGKAPMPAVITEVAKDGIHVQLDSGMVVKVNADALRLARSKRS</sequence>
<evidence type="ECO:0000255" key="1">
    <source>
        <dbReference type="HAMAP-Rule" id="MF_00749"/>
    </source>
</evidence>
<evidence type="ECO:0000256" key="2">
    <source>
        <dbReference type="SAM" id="MobiDB-lite"/>
    </source>
</evidence>
<accession>B4RZ39</accession>
<accession>F2GCV8</accession>
<reference key="1">
    <citation type="journal article" date="2008" name="ISME J.">
        <title>Comparative genomics of two ecotypes of the marine planktonic copiotroph Alteromonas macleodii suggests alternative lifestyles associated with different kinds of particulate organic matter.</title>
        <authorList>
            <person name="Ivars-Martinez E."/>
            <person name="Martin-Cuadrado A.-B."/>
            <person name="D'Auria G."/>
            <person name="Mira A."/>
            <person name="Ferriera S."/>
            <person name="Johnson J."/>
            <person name="Friedman R."/>
            <person name="Rodriguez-Valera F."/>
        </authorList>
    </citation>
    <scope>NUCLEOTIDE SEQUENCE [LARGE SCALE GENOMIC DNA]</scope>
    <source>
        <strain>DSM 17117 / CIP 110805 / LMG 28347 / Deep ecotype</strain>
    </source>
</reference>
<gene>
    <name evidence="1" type="primary">proQ</name>
    <name type="ordered locus">MADE_1010130</name>
</gene>
<name>PROQ_ALTMD</name>
<feature type="chain" id="PRO_1000192658" description="RNA chaperone ProQ">
    <location>
        <begin position="1"/>
        <end position="222"/>
    </location>
</feature>
<feature type="region of interest" description="Disordered" evidence="2">
    <location>
        <begin position="94"/>
        <end position="171"/>
    </location>
</feature>
<feature type="compositionally biased region" description="Basic and acidic residues" evidence="2">
    <location>
        <begin position="94"/>
        <end position="113"/>
    </location>
</feature>
<feature type="compositionally biased region" description="Basic residues" evidence="2">
    <location>
        <begin position="114"/>
        <end position="131"/>
    </location>
</feature>
<feature type="compositionally biased region" description="Basic and acidic residues" evidence="2">
    <location>
        <begin position="133"/>
        <end position="148"/>
    </location>
</feature>
<feature type="compositionally biased region" description="Low complexity" evidence="2">
    <location>
        <begin position="155"/>
        <end position="164"/>
    </location>
</feature>